<name>CHI2_ARTBC</name>
<dbReference type="EC" id="3.2.1.14" evidence="1"/>
<dbReference type="EMBL" id="ABSU01000013">
    <property type="protein sequence ID" value="EFE32746.1"/>
    <property type="status" value="ALT_SEQ"/>
    <property type="molecule type" value="Genomic_DNA"/>
</dbReference>
<dbReference type="RefSeq" id="XP_003013386.1">
    <property type="nucleotide sequence ID" value="XM_003013340.1"/>
</dbReference>
<dbReference type="SMR" id="D4AVJ0"/>
<dbReference type="STRING" id="663331.D4AVJ0"/>
<dbReference type="GeneID" id="9519422"/>
<dbReference type="KEGG" id="abe:ARB_00204"/>
<dbReference type="eggNOG" id="ENOG502S0WK">
    <property type="taxonomic scope" value="Eukaryota"/>
</dbReference>
<dbReference type="HOGENOM" id="CLU_019399_1_2_1"/>
<dbReference type="OrthoDB" id="73875at2759"/>
<dbReference type="Proteomes" id="UP000008866">
    <property type="component" value="Unassembled WGS sequence"/>
</dbReference>
<dbReference type="GO" id="GO:0005576">
    <property type="term" value="C:extracellular region"/>
    <property type="evidence" value="ECO:0007669"/>
    <property type="project" value="UniProtKB-SubCell"/>
</dbReference>
<dbReference type="GO" id="GO:0008061">
    <property type="term" value="F:chitin binding"/>
    <property type="evidence" value="ECO:0007669"/>
    <property type="project" value="InterPro"/>
</dbReference>
<dbReference type="GO" id="GO:0008843">
    <property type="term" value="F:endochitinase activity"/>
    <property type="evidence" value="ECO:0007669"/>
    <property type="project" value="UniProtKB-EC"/>
</dbReference>
<dbReference type="GO" id="GO:0006032">
    <property type="term" value="P:chitin catabolic process"/>
    <property type="evidence" value="ECO:0007669"/>
    <property type="project" value="UniProtKB-KW"/>
</dbReference>
<dbReference type="GO" id="GO:0000272">
    <property type="term" value="P:polysaccharide catabolic process"/>
    <property type="evidence" value="ECO:0007669"/>
    <property type="project" value="UniProtKB-KW"/>
</dbReference>
<dbReference type="CDD" id="cd02871">
    <property type="entry name" value="GH18_chitinase_D-like"/>
    <property type="match status" value="1"/>
</dbReference>
<dbReference type="Gene3D" id="3.20.20.80">
    <property type="entry name" value="Glycosidases"/>
    <property type="match status" value="1"/>
</dbReference>
<dbReference type="InterPro" id="IPR011583">
    <property type="entry name" value="Chitinase_II/V-like_cat"/>
</dbReference>
<dbReference type="InterPro" id="IPR001223">
    <property type="entry name" value="Glyco_hydro18_cat"/>
</dbReference>
<dbReference type="InterPro" id="IPR001579">
    <property type="entry name" value="Glyco_hydro_18_chit_AS"/>
</dbReference>
<dbReference type="InterPro" id="IPR017853">
    <property type="entry name" value="Glycoside_hydrolase_SF"/>
</dbReference>
<dbReference type="InterPro" id="IPR050542">
    <property type="entry name" value="Glycosyl_Hydrlase18_Chitinase"/>
</dbReference>
<dbReference type="PANTHER" id="PTHR45708">
    <property type="entry name" value="ENDOCHITINASE"/>
    <property type="match status" value="1"/>
</dbReference>
<dbReference type="PANTHER" id="PTHR45708:SF49">
    <property type="entry name" value="ENDOCHITINASE"/>
    <property type="match status" value="1"/>
</dbReference>
<dbReference type="Pfam" id="PF00704">
    <property type="entry name" value="Glyco_hydro_18"/>
    <property type="match status" value="1"/>
</dbReference>
<dbReference type="SMART" id="SM00636">
    <property type="entry name" value="Glyco_18"/>
    <property type="match status" value="1"/>
</dbReference>
<dbReference type="SUPFAM" id="SSF51445">
    <property type="entry name" value="(Trans)glycosidases"/>
    <property type="match status" value="1"/>
</dbReference>
<dbReference type="PROSITE" id="PS01095">
    <property type="entry name" value="GH18_1"/>
    <property type="match status" value="1"/>
</dbReference>
<dbReference type="PROSITE" id="PS51910">
    <property type="entry name" value="GH18_2"/>
    <property type="match status" value="1"/>
</dbReference>
<organism>
    <name type="scientific">Arthroderma benhamiae (strain ATCC MYA-4681 / CBS 112371)</name>
    <name type="common">Trichophyton mentagrophytes</name>
    <dbReference type="NCBI Taxonomy" id="663331"/>
    <lineage>
        <taxon>Eukaryota</taxon>
        <taxon>Fungi</taxon>
        <taxon>Dikarya</taxon>
        <taxon>Ascomycota</taxon>
        <taxon>Pezizomycotina</taxon>
        <taxon>Eurotiomycetes</taxon>
        <taxon>Eurotiomycetidae</taxon>
        <taxon>Onygenales</taxon>
        <taxon>Arthrodermataceae</taxon>
        <taxon>Trichophyton</taxon>
    </lineage>
</organism>
<comment type="function">
    <text evidence="1">Degrades chitin and chitotriose.</text>
</comment>
<comment type="catalytic activity">
    <reaction evidence="1">
        <text>Random endo-hydrolysis of N-acetyl-beta-D-glucosaminide (1-&gt;4)-beta-linkages in chitin and chitodextrins.</text>
        <dbReference type="EC" id="3.2.1.14"/>
    </reaction>
</comment>
<comment type="subcellular location">
    <subcellularLocation>
        <location evidence="5">Secreted</location>
    </subcellularLocation>
</comment>
<comment type="similarity">
    <text evidence="6">Belongs to the glycosyl hydrolase 18 family. Chitinase class II subfamily.</text>
</comment>
<comment type="sequence caution" evidence="6">
    <conflict type="erroneous gene model prediction">
        <sequence resource="EMBL-CDS" id="EFE32746"/>
    </conflict>
</comment>
<proteinExistence type="evidence at protein level"/>
<feature type="signal peptide" evidence="2">
    <location>
        <begin position="1"/>
        <end position="18"/>
    </location>
</feature>
<feature type="chain" id="PRO_0000434917" description="Probable class II chitinase ARB_00204">
    <location>
        <begin position="19"/>
        <end position="332"/>
    </location>
</feature>
<feature type="domain" description="GH18" evidence="4">
    <location>
        <begin position="19"/>
        <end position="331"/>
    </location>
</feature>
<feature type="active site" description="Proton donor" evidence="4">
    <location>
        <position position="118"/>
    </location>
</feature>
<feature type="glycosylation site" description="N-linked (GlcNAc...) asparagine" evidence="3">
    <location>
        <position position="245"/>
    </location>
</feature>
<accession>D4AVJ0</accession>
<evidence type="ECO:0000250" key="1">
    <source>
        <dbReference type="UniProtKB" id="Q9BZP6"/>
    </source>
</evidence>
<evidence type="ECO:0000255" key="2"/>
<evidence type="ECO:0000255" key="3">
    <source>
        <dbReference type="PROSITE-ProRule" id="PRU00498"/>
    </source>
</evidence>
<evidence type="ECO:0000255" key="4">
    <source>
        <dbReference type="PROSITE-ProRule" id="PRU01258"/>
    </source>
</evidence>
<evidence type="ECO:0000269" key="5">
    <source>
    </source>
</evidence>
<evidence type="ECO:0000305" key="6"/>
<reference key="1">
    <citation type="journal article" date="2011" name="Genome Biol.">
        <title>Comparative and functional genomics provide insights into the pathogenicity of dermatophytic fungi.</title>
        <authorList>
            <person name="Burmester A."/>
            <person name="Shelest E."/>
            <person name="Gloeckner G."/>
            <person name="Heddergott C."/>
            <person name="Schindler S."/>
            <person name="Staib P."/>
            <person name="Heidel A."/>
            <person name="Felder M."/>
            <person name="Petzold A."/>
            <person name="Szafranski K."/>
            <person name="Feuermann M."/>
            <person name="Pedruzzi I."/>
            <person name="Priebe S."/>
            <person name="Groth M."/>
            <person name="Winkler R."/>
            <person name="Li W."/>
            <person name="Kniemeyer O."/>
            <person name="Schroeckh V."/>
            <person name="Hertweck C."/>
            <person name="Hube B."/>
            <person name="White T.C."/>
            <person name="Platzer M."/>
            <person name="Guthke R."/>
            <person name="Heitman J."/>
            <person name="Woestemeyer J."/>
            <person name="Zipfel P.F."/>
            <person name="Monod M."/>
            <person name="Brakhage A.A."/>
        </authorList>
    </citation>
    <scope>NUCLEOTIDE SEQUENCE [LARGE SCALE GENOMIC DNA]</scope>
    <source>
        <strain>ATCC MYA-4681 / CBS 112371</strain>
    </source>
</reference>
<reference key="2">
    <citation type="journal article" date="2011" name="Proteomics">
        <title>Identification of novel secreted proteases during extracellular proteolysis by dermatophytes at acidic pH.</title>
        <authorList>
            <person name="Sriranganadane D."/>
            <person name="Waridel P."/>
            <person name="Salamin K."/>
            <person name="Feuermann M."/>
            <person name="Mignon B."/>
            <person name="Staib P."/>
            <person name="Neuhaus J.M."/>
            <person name="Quadroni M."/>
            <person name="Monod M."/>
        </authorList>
    </citation>
    <scope>IDENTIFICATION BY MASS SPECTROMETRY</scope>
    <scope>SUBCELLULAR LOCATION</scope>
</reference>
<sequence>MKTPFTILAALTVATTLADVPDEWDIIELSFGEPTSVDSGEIKFAMCPKTECPNVESEEEFKAAIKAKRAKGKKVLLSIGGQNGQVQLKTTEARDKFVSSVGGIIDKYGLDGLDIDFEGHSLYLDQGDTDFKNPKTSVVVNLIAALKSLKEKYGKAFVLTMAPETFFVQLGYSSYGPSNGNDARAGSYLPVIHAMRDDLTVLQVQNYNSGPIIGLDDQYHNVGTPDFLIAMADMLKAGFPVAKTNNTFPPLREDQIAIGLPSTVSAGNGFVDEKGVQDALNCLMKGESCGTYKPRGGKSPSFRGLMAWSINWDKFSNWGFLNPHRKYLDSFP</sequence>
<keyword id="KW-0119">Carbohydrate metabolism</keyword>
<keyword id="KW-0146">Chitin degradation</keyword>
<keyword id="KW-0325">Glycoprotein</keyword>
<keyword id="KW-0326">Glycosidase</keyword>
<keyword id="KW-0378">Hydrolase</keyword>
<keyword id="KW-0624">Polysaccharide degradation</keyword>
<keyword id="KW-1185">Reference proteome</keyword>
<keyword id="KW-0964">Secreted</keyword>
<keyword id="KW-0732">Signal</keyword>
<protein>
    <recommendedName>
        <fullName evidence="6">Probable class II chitinase ARB_00204</fullName>
        <ecNumber evidence="1">3.2.1.14</ecNumber>
    </recommendedName>
</protein>
<gene>
    <name type="ORF">ARB_00204</name>
</gene>